<accession>P75265</accession>
<protein>
    <recommendedName>
        <fullName>Uncharacterized lipoprotein MG186 homolog</fullName>
    </recommendedName>
</protein>
<evidence type="ECO:0000255" key="1">
    <source>
        <dbReference type="PROSITE-ProRule" id="PRU00272"/>
    </source>
</evidence>
<evidence type="ECO:0000255" key="2">
    <source>
        <dbReference type="PROSITE-ProRule" id="PRU00303"/>
    </source>
</evidence>
<evidence type="ECO:0000256" key="3">
    <source>
        <dbReference type="SAM" id="MobiDB-lite"/>
    </source>
</evidence>
<gene>
    <name type="ordered locus">MPN_133</name>
    <name type="ORF">E07_orf301</name>
    <name type="ORF">MP021</name>
</gene>
<sequence length="301" mass="33218">MKGFSCSRPGYLTGLLLLAVAPILTACTRDYTTKNEFQLTTAQQAKLKPATIEYWRDGDTPEINYASEERRKEAEQKSKENAKKEDKKEEKKTEDSQDSSSASTQVRSSKHGLRIYGIDTPEKHVSSKGDSTGDEKIEAEKASNYAEKLIPKGSTVWVWSLNTYSYDREVGALFFKSNPKQTFFQSFEVAMVEAGHAIPIAGTGLNLIADPELSADDPLSVIGLQLANAANKAYNAKINIWSHDTDGYRSLTAVYKLRGADISWTRFLDEANGYSSASAGTGASLYQLWDQRQAKLAQKGS</sequence>
<comment type="subcellular location">
    <subcellularLocation>
        <location evidence="2">Cell membrane</location>
        <topology evidence="2">Lipid-anchor</topology>
    </subcellularLocation>
</comment>
<organism>
    <name type="scientific">Mycoplasma pneumoniae (strain ATCC 29342 / M129 / Subtype 1)</name>
    <name type="common">Mycoplasmoides pneumoniae</name>
    <dbReference type="NCBI Taxonomy" id="272634"/>
    <lineage>
        <taxon>Bacteria</taxon>
        <taxon>Bacillati</taxon>
        <taxon>Mycoplasmatota</taxon>
        <taxon>Mycoplasmoidales</taxon>
        <taxon>Mycoplasmoidaceae</taxon>
        <taxon>Mycoplasmoides</taxon>
    </lineage>
</organism>
<proteinExistence type="evidence at protein level"/>
<keyword id="KW-1003">Cell membrane</keyword>
<keyword id="KW-0255">Endonuclease</keyword>
<keyword id="KW-0378">Hydrolase</keyword>
<keyword id="KW-0449">Lipoprotein</keyword>
<keyword id="KW-0472">Membrane</keyword>
<keyword id="KW-0540">Nuclease</keyword>
<keyword id="KW-0564">Palmitate</keyword>
<keyword id="KW-1185">Reference proteome</keyword>
<keyword id="KW-0732">Signal</keyword>
<dbReference type="EMBL" id="U00089">
    <property type="protein sequence ID" value="AAB95669.1"/>
    <property type="molecule type" value="Genomic_DNA"/>
</dbReference>
<dbReference type="PIR" id="S73347">
    <property type="entry name" value="S73347"/>
</dbReference>
<dbReference type="RefSeq" id="NP_109821.1">
    <property type="nucleotide sequence ID" value="NC_000912.1"/>
</dbReference>
<dbReference type="RefSeq" id="WP_010874490.1">
    <property type="nucleotide sequence ID" value="NC_000912.1"/>
</dbReference>
<dbReference type="IntAct" id="P75265">
    <property type="interactions" value="1"/>
</dbReference>
<dbReference type="STRING" id="272634.MPN_133"/>
<dbReference type="EnsemblBacteria" id="AAB95669">
    <property type="protein sequence ID" value="AAB95669"/>
    <property type="gene ID" value="MPN_133"/>
</dbReference>
<dbReference type="KEGG" id="mpn:MPN_133"/>
<dbReference type="PATRIC" id="fig|272634.6.peg.147"/>
<dbReference type="HOGENOM" id="CLU_972608_0_0_14"/>
<dbReference type="OrthoDB" id="398206at2"/>
<dbReference type="BioCyc" id="MPNE272634:G1GJ3-225-MONOMER"/>
<dbReference type="Proteomes" id="UP000000808">
    <property type="component" value="Chromosome"/>
</dbReference>
<dbReference type="GO" id="GO:0005886">
    <property type="term" value="C:plasma membrane"/>
    <property type="evidence" value="ECO:0007669"/>
    <property type="project" value="UniProtKB-SubCell"/>
</dbReference>
<dbReference type="GO" id="GO:0004519">
    <property type="term" value="F:endonuclease activity"/>
    <property type="evidence" value="ECO:0007669"/>
    <property type="project" value="UniProtKB-KW"/>
</dbReference>
<dbReference type="Gene3D" id="2.40.50.90">
    <property type="match status" value="1"/>
</dbReference>
<dbReference type="InterPro" id="IPR035437">
    <property type="entry name" value="SNase_OB-fold_sf"/>
</dbReference>
<dbReference type="InterPro" id="IPR016071">
    <property type="entry name" value="Staphylococal_nuclease_OB-fold"/>
</dbReference>
<dbReference type="SMART" id="SM00318">
    <property type="entry name" value="SNc"/>
    <property type="match status" value="1"/>
</dbReference>
<dbReference type="SUPFAM" id="SSF50199">
    <property type="entry name" value="Staphylococcal nuclease"/>
    <property type="match status" value="1"/>
</dbReference>
<dbReference type="PROSITE" id="PS51257">
    <property type="entry name" value="PROKAR_LIPOPROTEIN"/>
    <property type="match status" value="1"/>
</dbReference>
<dbReference type="PROSITE" id="PS50830">
    <property type="entry name" value="TNASE_3"/>
    <property type="match status" value="1"/>
</dbReference>
<name>Y133_MYCPN</name>
<feature type="signal peptide" evidence="2">
    <location>
        <begin position="1"/>
        <end position="26"/>
    </location>
</feature>
<feature type="chain" id="PRO_0000034399" description="Uncharacterized lipoprotein MG186 homolog">
    <location>
        <begin position="27"/>
        <end position="301"/>
    </location>
</feature>
<feature type="domain" description="TNase-like" evidence="1">
    <location>
        <begin position="46"/>
        <end position="243"/>
    </location>
</feature>
<feature type="region of interest" description="Disordered" evidence="3">
    <location>
        <begin position="64"/>
        <end position="136"/>
    </location>
</feature>
<feature type="compositionally biased region" description="Basic and acidic residues" evidence="3">
    <location>
        <begin position="67"/>
        <end position="95"/>
    </location>
</feature>
<feature type="compositionally biased region" description="Basic and acidic residues" evidence="3">
    <location>
        <begin position="120"/>
        <end position="136"/>
    </location>
</feature>
<feature type="lipid moiety-binding region" description="N-palmitoyl cysteine" evidence="2">
    <location>
        <position position="27"/>
    </location>
</feature>
<feature type="lipid moiety-binding region" description="S-diacylglycerol cysteine" evidence="2">
    <location>
        <position position="27"/>
    </location>
</feature>
<reference key="1">
    <citation type="journal article" date="1996" name="Nucleic Acids Res.">
        <title>Complete sequence analysis of the genome of the bacterium Mycoplasma pneumoniae.</title>
        <authorList>
            <person name="Himmelreich R."/>
            <person name="Hilbert H."/>
            <person name="Plagens H."/>
            <person name="Pirkl E."/>
            <person name="Li B.-C."/>
            <person name="Herrmann R."/>
        </authorList>
    </citation>
    <scope>NUCLEOTIDE SEQUENCE [LARGE SCALE GENOMIC DNA]</scope>
    <source>
        <strain>ATCC 29342 / M129 / Subtype 1</strain>
    </source>
</reference>
<reference key="2">
    <citation type="journal article" date="2000" name="Electrophoresis">
        <title>Towards a two-dimensional proteome map of Mycoplasma pneumoniae.</title>
        <authorList>
            <person name="Regula J.T."/>
            <person name="Ueberle B."/>
            <person name="Boguth G."/>
            <person name="Goerg A."/>
            <person name="Schnoelzer M."/>
            <person name="Herrmann R."/>
            <person name="Frank R."/>
        </authorList>
    </citation>
    <scope>IDENTIFICATION BY MASS SPECTROMETRY</scope>
    <source>
        <strain>ATCC 29342 / M129 / Subtype 1</strain>
    </source>
</reference>